<organism>
    <name type="scientific">Mus musculus</name>
    <name type="common">Mouse</name>
    <dbReference type="NCBI Taxonomy" id="10090"/>
    <lineage>
        <taxon>Eukaryota</taxon>
        <taxon>Metazoa</taxon>
        <taxon>Chordata</taxon>
        <taxon>Craniata</taxon>
        <taxon>Vertebrata</taxon>
        <taxon>Euteleostomi</taxon>
        <taxon>Mammalia</taxon>
        <taxon>Eutheria</taxon>
        <taxon>Euarchontoglires</taxon>
        <taxon>Glires</taxon>
        <taxon>Rodentia</taxon>
        <taxon>Myomorpha</taxon>
        <taxon>Muroidea</taxon>
        <taxon>Muridae</taxon>
        <taxon>Murinae</taxon>
        <taxon>Mus</taxon>
        <taxon>Mus</taxon>
    </lineage>
</organism>
<gene>
    <name type="primary">Dstn</name>
    <name type="synonym">Dsn</name>
    <name type="synonym">Sid23</name>
</gene>
<keyword id="KW-0007">Acetylation</keyword>
<keyword id="KW-0009">Actin-binding</keyword>
<keyword id="KW-0903">Direct protein sequencing</keyword>
<keyword id="KW-0597">Phosphoprotein</keyword>
<keyword id="KW-1185">Reference proteome</keyword>
<keyword id="KW-0832">Ubl conjugation</keyword>
<comment type="function">
    <text>Actin-depolymerizing protein. Severs actin filaments (F-actin) and binds to actin monomers (G-actin). Acts in a pH-independent manner.</text>
</comment>
<comment type="tissue specificity">
    <text evidence="5">Widely expressed. Not found in skeletal muscle.</text>
</comment>
<comment type="developmental stage">
    <text evidence="5">In 10.5 dpc embryo somites is expressed in a superficial patch of cells (adaxial region).</text>
</comment>
<comment type="PTM">
    <text evidence="1">ISGylated.</text>
</comment>
<comment type="similarity">
    <text evidence="6">Belongs to the actin-binding proteins ADF family.</text>
</comment>
<reference key="1">
    <citation type="submission" date="1999-03" db="EMBL/GenBank/DDBJ databases">
        <title>Mouse actin depolymerizing factor sid23.</title>
        <authorList>
            <person name="Seki N."/>
            <person name="Hattori A."/>
            <person name="Hayashi A."/>
            <person name="Kozuma S."/>
            <person name="Muramatsu M."/>
            <person name="Saito T."/>
        </authorList>
    </citation>
    <scope>NUCLEOTIDE SEQUENCE [MRNA]</scope>
</reference>
<reference key="2">
    <citation type="journal article" date="2005" name="Science">
        <title>The transcriptional landscape of the mammalian genome.</title>
        <authorList>
            <person name="Carninci P."/>
            <person name="Kasukawa T."/>
            <person name="Katayama S."/>
            <person name="Gough J."/>
            <person name="Frith M.C."/>
            <person name="Maeda N."/>
            <person name="Oyama R."/>
            <person name="Ravasi T."/>
            <person name="Lenhard B."/>
            <person name="Wells C."/>
            <person name="Kodzius R."/>
            <person name="Shimokawa K."/>
            <person name="Bajic V.B."/>
            <person name="Brenner S.E."/>
            <person name="Batalov S."/>
            <person name="Forrest A.R."/>
            <person name="Zavolan M."/>
            <person name="Davis M.J."/>
            <person name="Wilming L.G."/>
            <person name="Aidinis V."/>
            <person name="Allen J.E."/>
            <person name="Ambesi-Impiombato A."/>
            <person name="Apweiler R."/>
            <person name="Aturaliya R.N."/>
            <person name="Bailey T.L."/>
            <person name="Bansal M."/>
            <person name="Baxter L."/>
            <person name="Beisel K.W."/>
            <person name="Bersano T."/>
            <person name="Bono H."/>
            <person name="Chalk A.M."/>
            <person name="Chiu K.P."/>
            <person name="Choudhary V."/>
            <person name="Christoffels A."/>
            <person name="Clutterbuck D.R."/>
            <person name="Crowe M.L."/>
            <person name="Dalla E."/>
            <person name="Dalrymple B.P."/>
            <person name="de Bono B."/>
            <person name="Della Gatta G."/>
            <person name="di Bernardo D."/>
            <person name="Down T."/>
            <person name="Engstrom P."/>
            <person name="Fagiolini M."/>
            <person name="Faulkner G."/>
            <person name="Fletcher C.F."/>
            <person name="Fukushima T."/>
            <person name="Furuno M."/>
            <person name="Futaki S."/>
            <person name="Gariboldi M."/>
            <person name="Georgii-Hemming P."/>
            <person name="Gingeras T.R."/>
            <person name="Gojobori T."/>
            <person name="Green R.E."/>
            <person name="Gustincich S."/>
            <person name="Harbers M."/>
            <person name="Hayashi Y."/>
            <person name="Hensch T.K."/>
            <person name="Hirokawa N."/>
            <person name="Hill D."/>
            <person name="Huminiecki L."/>
            <person name="Iacono M."/>
            <person name="Ikeo K."/>
            <person name="Iwama A."/>
            <person name="Ishikawa T."/>
            <person name="Jakt M."/>
            <person name="Kanapin A."/>
            <person name="Katoh M."/>
            <person name="Kawasawa Y."/>
            <person name="Kelso J."/>
            <person name="Kitamura H."/>
            <person name="Kitano H."/>
            <person name="Kollias G."/>
            <person name="Krishnan S.P."/>
            <person name="Kruger A."/>
            <person name="Kummerfeld S.K."/>
            <person name="Kurochkin I.V."/>
            <person name="Lareau L.F."/>
            <person name="Lazarevic D."/>
            <person name="Lipovich L."/>
            <person name="Liu J."/>
            <person name="Liuni S."/>
            <person name="McWilliam S."/>
            <person name="Madan Babu M."/>
            <person name="Madera M."/>
            <person name="Marchionni L."/>
            <person name="Matsuda H."/>
            <person name="Matsuzawa S."/>
            <person name="Miki H."/>
            <person name="Mignone F."/>
            <person name="Miyake S."/>
            <person name="Morris K."/>
            <person name="Mottagui-Tabar S."/>
            <person name="Mulder N."/>
            <person name="Nakano N."/>
            <person name="Nakauchi H."/>
            <person name="Ng P."/>
            <person name="Nilsson R."/>
            <person name="Nishiguchi S."/>
            <person name="Nishikawa S."/>
            <person name="Nori F."/>
            <person name="Ohara O."/>
            <person name="Okazaki Y."/>
            <person name="Orlando V."/>
            <person name="Pang K.C."/>
            <person name="Pavan W.J."/>
            <person name="Pavesi G."/>
            <person name="Pesole G."/>
            <person name="Petrovsky N."/>
            <person name="Piazza S."/>
            <person name="Reed J."/>
            <person name="Reid J.F."/>
            <person name="Ring B.Z."/>
            <person name="Ringwald M."/>
            <person name="Rost B."/>
            <person name="Ruan Y."/>
            <person name="Salzberg S.L."/>
            <person name="Sandelin A."/>
            <person name="Schneider C."/>
            <person name="Schoenbach C."/>
            <person name="Sekiguchi K."/>
            <person name="Semple C.A."/>
            <person name="Seno S."/>
            <person name="Sessa L."/>
            <person name="Sheng Y."/>
            <person name="Shibata Y."/>
            <person name="Shimada H."/>
            <person name="Shimada K."/>
            <person name="Silva D."/>
            <person name="Sinclair B."/>
            <person name="Sperling S."/>
            <person name="Stupka E."/>
            <person name="Sugiura K."/>
            <person name="Sultana R."/>
            <person name="Takenaka Y."/>
            <person name="Taki K."/>
            <person name="Tammoja K."/>
            <person name="Tan S.L."/>
            <person name="Tang S."/>
            <person name="Taylor M.S."/>
            <person name="Tegner J."/>
            <person name="Teichmann S.A."/>
            <person name="Ueda H.R."/>
            <person name="van Nimwegen E."/>
            <person name="Verardo R."/>
            <person name="Wei C.L."/>
            <person name="Yagi K."/>
            <person name="Yamanishi H."/>
            <person name="Zabarovsky E."/>
            <person name="Zhu S."/>
            <person name="Zimmer A."/>
            <person name="Hide W."/>
            <person name="Bult C."/>
            <person name="Grimmond S.M."/>
            <person name="Teasdale R.D."/>
            <person name="Liu E.T."/>
            <person name="Brusic V."/>
            <person name="Quackenbush J."/>
            <person name="Wahlestedt C."/>
            <person name="Mattick J.S."/>
            <person name="Hume D.A."/>
            <person name="Kai C."/>
            <person name="Sasaki D."/>
            <person name="Tomaru Y."/>
            <person name="Fukuda S."/>
            <person name="Kanamori-Katayama M."/>
            <person name="Suzuki M."/>
            <person name="Aoki J."/>
            <person name="Arakawa T."/>
            <person name="Iida J."/>
            <person name="Imamura K."/>
            <person name="Itoh M."/>
            <person name="Kato T."/>
            <person name="Kawaji H."/>
            <person name="Kawagashira N."/>
            <person name="Kawashima T."/>
            <person name="Kojima M."/>
            <person name="Kondo S."/>
            <person name="Konno H."/>
            <person name="Nakano K."/>
            <person name="Ninomiya N."/>
            <person name="Nishio T."/>
            <person name="Okada M."/>
            <person name="Plessy C."/>
            <person name="Shibata K."/>
            <person name="Shiraki T."/>
            <person name="Suzuki S."/>
            <person name="Tagami M."/>
            <person name="Waki K."/>
            <person name="Watahiki A."/>
            <person name="Okamura-Oho Y."/>
            <person name="Suzuki H."/>
            <person name="Kawai J."/>
            <person name="Hayashizaki Y."/>
        </authorList>
    </citation>
    <scope>NUCLEOTIDE SEQUENCE [LARGE SCALE MRNA]</scope>
    <source>
        <strain>C57BL/6J</strain>
        <tissue>Cecum</tissue>
    </source>
</reference>
<reference key="3">
    <citation type="submission" date="2007-03" db="UniProtKB">
        <authorList>
            <person name="Lubec G."/>
            <person name="Klug S."/>
        </authorList>
    </citation>
    <scope>PROTEIN SEQUENCE OF 54-69 AND 133-145</scope>
    <scope>IDENTIFICATION BY MASS SPECTROMETRY</scope>
    <source>
        <tissue>Hippocampus</tissue>
    </source>
</reference>
<reference key="4">
    <citation type="journal article" date="2002" name="Mol. Biol. Cell">
        <title>The three mouse actin-depolymerizing factor/cofilins evolved to fulfill cell-type-specific requirements for actin dynamics.</title>
        <authorList>
            <person name="Vartiainen M.K."/>
            <person name="Mustonen T."/>
            <person name="Mattila P.K."/>
            <person name="Ojala P.J."/>
            <person name="Thesleff I."/>
            <person name="Partanen J."/>
            <person name="Lappalainen P."/>
        </authorList>
    </citation>
    <scope>FUNCTION</scope>
    <scope>DEVELOPMENTAL STAGE</scope>
</reference>
<reference key="5">
    <citation type="journal article" date="2009" name="Mol. Cell. Proteomics">
        <title>Large scale localization of protein phosphorylation by use of electron capture dissociation mass spectrometry.</title>
        <authorList>
            <person name="Sweet S.M."/>
            <person name="Bailey C.M."/>
            <person name="Cunningham D.L."/>
            <person name="Heath J.K."/>
            <person name="Cooper H.J."/>
        </authorList>
    </citation>
    <scope>ACETYLATION [LARGE SCALE ANALYSIS] AT ALA-2</scope>
    <scope>PHOSPHORYLATION [LARGE SCALE ANALYSIS] AT SER-3</scope>
    <scope>CLEAVAGE OF INITIATOR METHIONINE [LARGE SCALE ANALYSIS]</scope>
    <scope>IDENTIFICATION BY MASS SPECTROMETRY [LARGE SCALE ANALYSIS]</scope>
    <source>
        <tissue>Embryonic fibroblast</tissue>
    </source>
</reference>
<reference key="6">
    <citation type="journal article" date="2010" name="Cell">
        <title>A tissue-specific atlas of mouse protein phosphorylation and expression.</title>
        <authorList>
            <person name="Huttlin E.L."/>
            <person name="Jedrychowski M.P."/>
            <person name="Elias J.E."/>
            <person name="Goswami T."/>
            <person name="Rad R."/>
            <person name="Beausoleil S.A."/>
            <person name="Villen J."/>
            <person name="Haas W."/>
            <person name="Sowa M.E."/>
            <person name="Gygi S.P."/>
        </authorList>
    </citation>
    <scope>IDENTIFICATION BY MASS SPECTROMETRY [LARGE SCALE ANALYSIS]</scope>
    <source>
        <tissue>Brain</tissue>
        <tissue>Brown adipose tissue</tissue>
        <tissue>Heart</tissue>
        <tissue>Kidney</tissue>
        <tissue>Liver</tissue>
        <tissue>Lung</tissue>
        <tissue>Pancreas</tissue>
        <tissue>Spleen</tissue>
        <tissue>Testis</tissue>
    </source>
</reference>
<name>DEST_MOUSE</name>
<evidence type="ECO:0000250" key="1"/>
<evidence type="ECO:0000250" key="2">
    <source>
        <dbReference type="UniProtKB" id="P60981"/>
    </source>
</evidence>
<evidence type="ECO:0000255" key="3"/>
<evidence type="ECO:0000255" key="4">
    <source>
        <dbReference type="PROSITE-ProRule" id="PRU00599"/>
    </source>
</evidence>
<evidence type="ECO:0000269" key="5">
    <source>
    </source>
</evidence>
<evidence type="ECO:0000305" key="6"/>
<evidence type="ECO:0007744" key="7">
    <source>
    </source>
</evidence>
<sequence length="165" mass="18522">MASGVQVADEVCRIFYDMKVRKCSTPEEIKKRKKAVIFCLSADKKCIVVEEGKEILVGDVGATITDPFKHFVGMLPEKDCRYALYDASFETKESRKEELMFFLWAPEQAPLKSKMIYASSKDAIKKKFPGIKHEYQANGPEDLNRTCIAEKLGGSLIVAFEGSPV</sequence>
<protein>
    <recommendedName>
        <fullName>Destrin</fullName>
    </recommendedName>
    <alternativeName>
        <fullName>Actin-depolymerizing factor</fullName>
        <shortName>ADF</shortName>
    </alternativeName>
    <alternativeName>
        <fullName>Sid 23</fullName>
    </alternativeName>
</protein>
<feature type="initiator methionine" description="Removed" evidence="7">
    <location>
        <position position="1"/>
    </location>
</feature>
<feature type="chain" id="PRO_0000214919" description="Destrin">
    <location>
        <begin position="2"/>
        <end position="165"/>
    </location>
</feature>
<feature type="domain" description="ADF-H" evidence="4">
    <location>
        <begin position="4"/>
        <end position="153"/>
    </location>
</feature>
<feature type="short sequence motif" description="Nuclear localization signal" evidence="3">
    <location>
        <begin position="30"/>
        <end position="34"/>
    </location>
</feature>
<feature type="modified residue" description="N-acetylalanine" evidence="7">
    <location>
        <position position="2"/>
    </location>
</feature>
<feature type="modified residue" description="Phosphoserine" evidence="7">
    <location>
        <position position="3"/>
    </location>
</feature>
<feature type="modified residue" description="N6-acetyllysine" evidence="2">
    <location>
        <position position="19"/>
    </location>
</feature>
<proteinExistence type="evidence at protein level"/>
<accession>Q9R0P5</accession>
<dbReference type="EMBL" id="AB025406">
    <property type="protein sequence ID" value="BAA84691.1"/>
    <property type="molecule type" value="mRNA"/>
</dbReference>
<dbReference type="EMBL" id="AK078898">
    <property type="protein sequence ID" value="BAC37447.1"/>
    <property type="molecule type" value="mRNA"/>
</dbReference>
<dbReference type="CCDS" id="CCDS16812.1"/>
<dbReference type="RefSeq" id="NP_062745.1">
    <property type="nucleotide sequence ID" value="NM_019771.2"/>
</dbReference>
<dbReference type="SMR" id="Q9R0P5"/>
<dbReference type="BioGRID" id="207975">
    <property type="interactions" value="19"/>
</dbReference>
<dbReference type="FunCoup" id="Q9R0P5">
    <property type="interactions" value="1655"/>
</dbReference>
<dbReference type="IntAct" id="Q9R0P5">
    <property type="interactions" value="7"/>
</dbReference>
<dbReference type="MINT" id="Q9R0P5"/>
<dbReference type="STRING" id="10090.ENSMUSP00000099461"/>
<dbReference type="GlyGen" id="Q9R0P5">
    <property type="glycosylation" value="1 site, 1 O-linked glycan (1 site)"/>
</dbReference>
<dbReference type="iPTMnet" id="Q9R0P5"/>
<dbReference type="MetOSite" id="Q9R0P5"/>
<dbReference type="PhosphoSitePlus" id="Q9R0P5"/>
<dbReference type="SwissPalm" id="Q9R0P5"/>
<dbReference type="REPRODUCTION-2DPAGE" id="IPI00127942"/>
<dbReference type="REPRODUCTION-2DPAGE" id="Q9R0P5"/>
<dbReference type="jPOST" id="Q9R0P5"/>
<dbReference type="PaxDb" id="10090-ENSMUSP00000099461"/>
<dbReference type="ProteomicsDB" id="277982"/>
<dbReference type="Pumba" id="Q9R0P5"/>
<dbReference type="Antibodypedia" id="9232">
    <property type="antibodies" value="424 antibodies from 29 providers"/>
</dbReference>
<dbReference type="DNASU" id="56431"/>
<dbReference type="Ensembl" id="ENSMUST00000103172.4">
    <property type="protein sequence ID" value="ENSMUSP00000099461.4"/>
    <property type="gene ID" value="ENSMUSG00000015932.9"/>
</dbReference>
<dbReference type="GeneID" id="56431"/>
<dbReference type="KEGG" id="mmu:56431"/>
<dbReference type="UCSC" id="uc008mqi.2">
    <property type="organism name" value="mouse"/>
</dbReference>
<dbReference type="AGR" id="MGI:1929270"/>
<dbReference type="CTD" id="11034"/>
<dbReference type="MGI" id="MGI:1929270">
    <property type="gene designation" value="Dstn"/>
</dbReference>
<dbReference type="VEuPathDB" id="HostDB:ENSMUSG00000015932"/>
<dbReference type="eggNOG" id="KOG1735">
    <property type="taxonomic scope" value="Eukaryota"/>
</dbReference>
<dbReference type="GeneTree" id="ENSGT00950000183000"/>
<dbReference type="HOGENOM" id="CLU_094004_0_0_1"/>
<dbReference type="InParanoid" id="Q9R0P5"/>
<dbReference type="OMA" id="ITFYSWS"/>
<dbReference type="OrthoDB" id="10249245at2759"/>
<dbReference type="PhylomeDB" id="Q9R0P5"/>
<dbReference type="TreeFam" id="TF328601"/>
<dbReference type="BioGRID-ORCS" id="56431">
    <property type="hits" value="3 hits in 78 CRISPR screens"/>
</dbReference>
<dbReference type="CD-CODE" id="CE726F99">
    <property type="entry name" value="Postsynaptic density"/>
</dbReference>
<dbReference type="ChiTaRS" id="Dstn">
    <property type="organism name" value="mouse"/>
</dbReference>
<dbReference type="PRO" id="PR:Q9R0P5"/>
<dbReference type="Proteomes" id="UP000000589">
    <property type="component" value="Chromosome 2"/>
</dbReference>
<dbReference type="RNAct" id="Q9R0P5">
    <property type="molecule type" value="protein"/>
</dbReference>
<dbReference type="Bgee" id="ENSMUSG00000015932">
    <property type="expression patterns" value="Expressed in ileal epithelium and 276 other cell types or tissues"/>
</dbReference>
<dbReference type="ExpressionAtlas" id="Q9R0P5">
    <property type="expression patterns" value="baseline and differential"/>
</dbReference>
<dbReference type="GO" id="GO:0030864">
    <property type="term" value="C:cortical actin cytoskeleton"/>
    <property type="evidence" value="ECO:0000314"/>
    <property type="project" value="MGI"/>
</dbReference>
<dbReference type="GO" id="GO:0005737">
    <property type="term" value="C:cytoplasm"/>
    <property type="evidence" value="ECO:0000314"/>
    <property type="project" value="MGI"/>
</dbReference>
<dbReference type="GO" id="GO:0098978">
    <property type="term" value="C:glutamatergic synapse"/>
    <property type="evidence" value="ECO:0000314"/>
    <property type="project" value="SynGO"/>
</dbReference>
<dbReference type="GO" id="GO:0098794">
    <property type="term" value="C:postsynapse"/>
    <property type="evidence" value="ECO:0000314"/>
    <property type="project" value="SynGO"/>
</dbReference>
<dbReference type="GO" id="GO:0098793">
    <property type="term" value="C:presynapse"/>
    <property type="evidence" value="ECO:0000314"/>
    <property type="project" value="SynGO"/>
</dbReference>
<dbReference type="GO" id="GO:0051015">
    <property type="term" value="F:actin filament binding"/>
    <property type="evidence" value="ECO:0000314"/>
    <property type="project" value="UniProtKB"/>
</dbReference>
<dbReference type="GO" id="GO:0030042">
    <property type="term" value="P:actin filament depolymerization"/>
    <property type="evidence" value="ECO:0000314"/>
    <property type="project" value="UniProtKB"/>
</dbReference>
<dbReference type="GO" id="GO:0030043">
    <property type="term" value="P:actin filament fragmentation"/>
    <property type="evidence" value="ECO:0000314"/>
    <property type="project" value="UniProtKB"/>
</dbReference>
<dbReference type="GO" id="GO:0048870">
    <property type="term" value="P:cell motility"/>
    <property type="evidence" value="ECO:0000315"/>
    <property type="project" value="MGI"/>
</dbReference>
<dbReference type="GO" id="GO:0030836">
    <property type="term" value="P:positive regulation of actin filament depolymerization"/>
    <property type="evidence" value="ECO:0000315"/>
    <property type="project" value="MGI"/>
</dbReference>
<dbReference type="CDD" id="cd11286">
    <property type="entry name" value="ADF_cofilin_like"/>
    <property type="match status" value="1"/>
</dbReference>
<dbReference type="FunFam" id="3.40.20.10:FF:000010">
    <property type="entry name" value="Putative destrin"/>
    <property type="match status" value="1"/>
</dbReference>
<dbReference type="Gene3D" id="3.40.20.10">
    <property type="entry name" value="Severin"/>
    <property type="match status" value="1"/>
</dbReference>
<dbReference type="InterPro" id="IPR002108">
    <property type="entry name" value="ADF-H"/>
</dbReference>
<dbReference type="InterPro" id="IPR029006">
    <property type="entry name" value="ADF-H/Gelsolin-like_dom_sf"/>
</dbReference>
<dbReference type="InterPro" id="IPR017904">
    <property type="entry name" value="ADF/Cofilin"/>
</dbReference>
<dbReference type="PANTHER" id="PTHR11913">
    <property type="entry name" value="COFILIN-RELATED"/>
    <property type="match status" value="1"/>
</dbReference>
<dbReference type="Pfam" id="PF00241">
    <property type="entry name" value="Cofilin_ADF"/>
    <property type="match status" value="1"/>
</dbReference>
<dbReference type="PRINTS" id="PR00006">
    <property type="entry name" value="COFILIN"/>
</dbReference>
<dbReference type="SMART" id="SM00102">
    <property type="entry name" value="ADF"/>
    <property type="match status" value="1"/>
</dbReference>
<dbReference type="SUPFAM" id="SSF55753">
    <property type="entry name" value="Actin depolymerizing proteins"/>
    <property type="match status" value="1"/>
</dbReference>
<dbReference type="PROSITE" id="PS51263">
    <property type="entry name" value="ADF_H"/>
    <property type="match status" value="1"/>
</dbReference>